<gene>
    <name evidence="1" type="primary">ureB</name>
    <name type="ordered locus">azo3505</name>
</gene>
<accession>A1KBB5</accession>
<reference key="1">
    <citation type="journal article" date="2006" name="Nat. Biotechnol.">
        <title>Complete genome of the mutualistic, N2-fixing grass endophyte Azoarcus sp. strain BH72.</title>
        <authorList>
            <person name="Krause A."/>
            <person name="Ramakumar A."/>
            <person name="Bartels D."/>
            <person name="Battistoni F."/>
            <person name="Bekel T."/>
            <person name="Boch J."/>
            <person name="Boehm M."/>
            <person name="Friedrich F."/>
            <person name="Hurek T."/>
            <person name="Krause L."/>
            <person name="Linke B."/>
            <person name="McHardy A.C."/>
            <person name="Sarkar A."/>
            <person name="Schneiker S."/>
            <person name="Syed A.A."/>
            <person name="Thauer R."/>
            <person name="Vorhoelter F.-J."/>
            <person name="Weidner S."/>
            <person name="Puehler A."/>
            <person name="Reinhold-Hurek B."/>
            <person name="Kaiser O."/>
            <person name="Goesmann A."/>
        </authorList>
    </citation>
    <scope>NUCLEOTIDE SEQUENCE [LARGE SCALE GENOMIC DNA]</scope>
    <source>
        <strain>BH72</strain>
    </source>
</reference>
<protein>
    <recommendedName>
        <fullName evidence="1">Urease subunit beta</fullName>
        <ecNumber evidence="1">3.5.1.5</ecNumber>
    </recommendedName>
    <alternativeName>
        <fullName evidence="1">Urea amidohydrolase subunit beta</fullName>
    </alternativeName>
</protein>
<feature type="chain" id="PRO_1000070715" description="Urease subunit beta">
    <location>
        <begin position="1"/>
        <end position="101"/>
    </location>
</feature>
<sequence>MIPGEILPADGDIELNAGRATLTLSVTNTGDRPIQVGSHYHFAETNAALAFDRAAARGFRLNIAAGTAVRFEPGQARTVELVALAGARKVYGFNGDVMGAL</sequence>
<dbReference type="EC" id="3.5.1.5" evidence="1"/>
<dbReference type="EMBL" id="AM406670">
    <property type="protein sequence ID" value="CAL96121.1"/>
    <property type="molecule type" value="Genomic_DNA"/>
</dbReference>
<dbReference type="RefSeq" id="WP_011767227.1">
    <property type="nucleotide sequence ID" value="NC_008702.1"/>
</dbReference>
<dbReference type="SMR" id="A1KBB5"/>
<dbReference type="STRING" id="62928.azo3505"/>
<dbReference type="KEGG" id="aoa:dqs_3648"/>
<dbReference type="KEGG" id="azo:azo3505"/>
<dbReference type="eggNOG" id="COG0832">
    <property type="taxonomic scope" value="Bacteria"/>
</dbReference>
<dbReference type="HOGENOM" id="CLU_129707_1_1_4"/>
<dbReference type="OrthoDB" id="9797217at2"/>
<dbReference type="UniPathway" id="UPA00258">
    <property type="reaction ID" value="UER00370"/>
</dbReference>
<dbReference type="Proteomes" id="UP000002588">
    <property type="component" value="Chromosome"/>
</dbReference>
<dbReference type="GO" id="GO:0035550">
    <property type="term" value="C:urease complex"/>
    <property type="evidence" value="ECO:0007669"/>
    <property type="project" value="InterPro"/>
</dbReference>
<dbReference type="GO" id="GO:0009039">
    <property type="term" value="F:urease activity"/>
    <property type="evidence" value="ECO:0007669"/>
    <property type="project" value="UniProtKB-UniRule"/>
</dbReference>
<dbReference type="GO" id="GO:0043419">
    <property type="term" value="P:urea catabolic process"/>
    <property type="evidence" value="ECO:0007669"/>
    <property type="project" value="UniProtKB-UniRule"/>
</dbReference>
<dbReference type="CDD" id="cd00407">
    <property type="entry name" value="Urease_beta"/>
    <property type="match status" value="1"/>
</dbReference>
<dbReference type="FunFam" id="2.10.150.10:FF:000001">
    <property type="entry name" value="Urease subunit beta"/>
    <property type="match status" value="1"/>
</dbReference>
<dbReference type="Gene3D" id="2.10.150.10">
    <property type="entry name" value="Urease, beta subunit"/>
    <property type="match status" value="1"/>
</dbReference>
<dbReference type="HAMAP" id="MF_01954">
    <property type="entry name" value="Urease_beta"/>
    <property type="match status" value="1"/>
</dbReference>
<dbReference type="InterPro" id="IPR002019">
    <property type="entry name" value="Urease_beta-like"/>
</dbReference>
<dbReference type="InterPro" id="IPR036461">
    <property type="entry name" value="Urease_betasu_sf"/>
</dbReference>
<dbReference type="InterPro" id="IPR050069">
    <property type="entry name" value="Urease_subunit"/>
</dbReference>
<dbReference type="NCBIfam" id="NF009682">
    <property type="entry name" value="PRK13203.1"/>
    <property type="match status" value="1"/>
</dbReference>
<dbReference type="NCBIfam" id="TIGR00192">
    <property type="entry name" value="urease_beta"/>
    <property type="match status" value="1"/>
</dbReference>
<dbReference type="PANTHER" id="PTHR33569">
    <property type="entry name" value="UREASE"/>
    <property type="match status" value="1"/>
</dbReference>
<dbReference type="PANTHER" id="PTHR33569:SF1">
    <property type="entry name" value="UREASE"/>
    <property type="match status" value="1"/>
</dbReference>
<dbReference type="Pfam" id="PF00699">
    <property type="entry name" value="Urease_beta"/>
    <property type="match status" value="1"/>
</dbReference>
<dbReference type="SUPFAM" id="SSF51278">
    <property type="entry name" value="Urease, beta-subunit"/>
    <property type="match status" value="1"/>
</dbReference>
<keyword id="KW-0963">Cytoplasm</keyword>
<keyword id="KW-0378">Hydrolase</keyword>
<keyword id="KW-1185">Reference proteome</keyword>
<organism>
    <name type="scientific">Azoarcus sp. (strain BH72)</name>
    <dbReference type="NCBI Taxonomy" id="418699"/>
    <lineage>
        <taxon>Bacteria</taxon>
        <taxon>Pseudomonadati</taxon>
        <taxon>Pseudomonadota</taxon>
        <taxon>Betaproteobacteria</taxon>
        <taxon>Rhodocyclales</taxon>
        <taxon>Zoogloeaceae</taxon>
        <taxon>Azoarcus</taxon>
    </lineage>
</organism>
<name>URE2_AZOSB</name>
<evidence type="ECO:0000255" key="1">
    <source>
        <dbReference type="HAMAP-Rule" id="MF_01954"/>
    </source>
</evidence>
<proteinExistence type="inferred from homology"/>
<comment type="catalytic activity">
    <reaction evidence="1">
        <text>urea + 2 H2O + H(+) = hydrogencarbonate + 2 NH4(+)</text>
        <dbReference type="Rhea" id="RHEA:20557"/>
        <dbReference type="ChEBI" id="CHEBI:15377"/>
        <dbReference type="ChEBI" id="CHEBI:15378"/>
        <dbReference type="ChEBI" id="CHEBI:16199"/>
        <dbReference type="ChEBI" id="CHEBI:17544"/>
        <dbReference type="ChEBI" id="CHEBI:28938"/>
        <dbReference type="EC" id="3.5.1.5"/>
    </reaction>
</comment>
<comment type="pathway">
    <text evidence="1">Nitrogen metabolism; urea degradation; CO(2) and NH(3) from urea (urease route): step 1/1.</text>
</comment>
<comment type="subunit">
    <text evidence="1">Heterotrimer of UreA (gamma), UreB (beta) and UreC (alpha) subunits. Three heterotrimers associate to form the active enzyme.</text>
</comment>
<comment type="subcellular location">
    <subcellularLocation>
        <location evidence="1">Cytoplasm</location>
    </subcellularLocation>
</comment>
<comment type="similarity">
    <text evidence="1">Belongs to the urease beta subunit family.</text>
</comment>